<dbReference type="EMBL" id="AF281133">
    <property type="protein sequence ID" value="AAF82134.1"/>
    <property type="molecule type" value="mRNA"/>
</dbReference>
<dbReference type="EMBL" id="AK000598">
    <property type="protein sequence ID" value="BAA91279.1"/>
    <property type="molecule type" value="mRNA"/>
</dbReference>
<dbReference type="EMBL" id="AC109322">
    <property type="status" value="NOT_ANNOTATED_CDS"/>
    <property type="molecule type" value="Genomic_DNA"/>
</dbReference>
<dbReference type="EMBL" id="BC002777">
    <property type="protein sequence ID" value="AAH02777.1"/>
    <property type="molecule type" value="mRNA"/>
</dbReference>
<dbReference type="CCDS" id="CCDS6414.1"/>
<dbReference type="RefSeq" id="NP_061910.1">
    <property type="nucleotide sequence ID" value="NM_019037.3"/>
</dbReference>
<dbReference type="PDB" id="2NN6">
    <property type="method" value="X-ray"/>
    <property type="resolution" value="3.35 A"/>
    <property type="chains" value="B=2-245"/>
</dbReference>
<dbReference type="PDB" id="6D6Q">
    <property type="method" value="EM"/>
    <property type="resolution" value="3.45 A"/>
    <property type="chains" value="B=1-245"/>
</dbReference>
<dbReference type="PDB" id="6D6R">
    <property type="method" value="EM"/>
    <property type="resolution" value="3.45 A"/>
    <property type="chains" value="B=1-245"/>
</dbReference>
<dbReference type="PDB" id="6H25">
    <property type="method" value="EM"/>
    <property type="resolution" value="3.80 A"/>
    <property type="chains" value="B=1-245"/>
</dbReference>
<dbReference type="PDB" id="9G8M">
    <property type="method" value="EM"/>
    <property type="resolution" value="3.30 A"/>
    <property type="chains" value="L=1-245"/>
</dbReference>
<dbReference type="PDB" id="9G8N">
    <property type="method" value="EM"/>
    <property type="resolution" value="3.70 A"/>
    <property type="chains" value="L=1-245"/>
</dbReference>
<dbReference type="PDB" id="9G8O">
    <property type="method" value="EM"/>
    <property type="resolution" value="3.40 A"/>
    <property type="chains" value="N=1-245"/>
</dbReference>
<dbReference type="PDB" id="9G8P">
    <property type="method" value="EM"/>
    <property type="resolution" value="7.00 A"/>
    <property type="chains" value="L=1-245"/>
</dbReference>
<dbReference type="PDBsum" id="2NN6"/>
<dbReference type="PDBsum" id="6D6Q"/>
<dbReference type="PDBsum" id="6D6R"/>
<dbReference type="PDBsum" id="6H25"/>
<dbReference type="PDBsum" id="9G8M"/>
<dbReference type="PDBsum" id="9G8N"/>
<dbReference type="PDBsum" id="9G8O"/>
<dbReference type="PDBsum" id="9G8P"/>
<dbReference type="EMDB" id="EMD-0127"/>
<dbReference type="EMDB" id="EMD-0128"/>
<dbReference type="EMDB" id="EMD-14515"/>
<dbReference type="EMDB" id="EMD-51132"/>
<dbReference type="EMDB" id="EMD-51133"/>
<dbReference type="EMDB" id="EMD-51134"/>
<dbReference type="EMDB" id="EMD-51135"/>
<dbReference type="EMDB" id="EMD-7808"/>
<dbReference type="EMDB" id="EMD-7809"/>
<dbReference type="SMR" id="Q9NPD3"/>
<dbReference type="BioGRID" id="120007">
    <property type="interactions" value="208"/>
</dbReference>
<dbReference type="ComplexPortal" id="CPX-476">
    <property type="entry name" value="Nuclear exosome complex, DIS3-EXOSC10 variant"/>
</dbReference>
<dbReference type="ComplexPortal" id="CPX-591">
    <property type="entry name" value="Nucleolar exosome complex, EXOSC10 variant"/>
</dbReference>
<dbReference type="ComplexPortal" id="CPX-592">
    <property type="entry name" value="Cytoplasmic exosome complex, DIS3L variant"/>
</dbReference>
<dbReference type="ComplexPortal" id="CPX-593">
    <property type="entry name" value="Exosome complex, DIS3 variant"/>
</dbReference>
<dbReference type="ComplexPortal" id="CPX-600">
    <property type="entry name" value="Cytoplasmic exosome complex, DIS3L-EXOSC10 variant"/>
</dbReference>
<dbReference type="CORUM" id="Q9NPD3"/>
<dbReference type="DIP" id="DIP-31165N"/>
<dbReference type="FunCoup" id="Q9NPD3">
    <property type="interactions" value="2514"/>
</dbReference>
<dbReference type="IntAct" id="Q9NPD3">
    <property type="interactions" value="94"/>
</dbReference>
<dbReference type="MINT" id="Q9NPD3"/>
<dbReference type="STRING" id="9606.ENSP00000315476"/>
<dbReference type="MoonDB" id="Q9NPD3">
    <property type="type" value="Predicted"/>
</dbReference>
<dbReference type="GlyGen" id="Q9NPD3">
    <property type="glycosylation" value="1 site, 1 O-linked glycan (1 site)"/>
</dbReference>
<dbReference type="iPTMnet" id="Q9NPD3"/>
<dbReference type="MetOSite" id="Q9NPD3"/>
<dbReference type="PhosphoSitePlus" id="Q9NPD3"/>
<dbReference type="SwissPalm" id="Q9NPD3"/>
<dbReference type="BioMuta" id="EXOSC4"/>
<dbReference type="DMDM" id="14285756"/>
<dbReference type="jPOST" id="Q9NPD3"/>
<dbReference type="MassIVE" id="Q9NPD3"/>
<dbReference type="PaxDb" id="9606-ENSP00000315476"/>
<dbReference type="PeptideAtlas" id="Q9NPD3"/>
<dbReference type="ProteomicsDB" id="81973"/>
<dbReference type="Pumba" id="Q9NPD3"/>
<dbReference type="Antibodypedia" id="14755">
    <property type="antibodies" value="178 antibodies from 26 providers"/>
</dbReference>
<dbReference type="DNASU" id="54512"/>
<dbReference type="Ensembl" id="ENST00000316052.6">
    <property type="protein sequence ID" value="ENSP00000315476.4"/>
    <property type="gene ID" value="ENSG00000178896.9"/>
</dbReference>
<dbReference type="GeneID" id="54512"/>
<dbReference type="KEGG" id="hsa:54512"/>
<dbReference type="MANE-Select" id="ENST00000316052.6">
    <property type="protein sequence ID" value="ENSP00000315476.4"/>
    <property type="RefSeq nucleotide sequence ID" value="NM_019037.3"/>
    <property type="RefSeq protein sequence ID" value="NP_061910.1"/>
</dbReference>
<dbReference type="UCSC" id="uc003zau.4">
    <property type="organism name" value="human"/>
</dbReference>
<dbReference type="AGR" id="HGNC:18189"/>
<dbReference type="CTD" id="54512"/>
<dbReference type="DisGeNET" id="54512"/>
<dbReference type="GeneCards" id="EXOSC4"/>
<dbReference type="HGNC" id="HGNC:18189">
    <property type="gene designation" value="EXOSC4"/>
</dbReference>
<dbReference type="HPA" id="ENSG00000178896">
    <property type="expression patterns" value="Tissue enhanced (testis)"/>
</dbReference>
<dbReference type="MIM" id="606491">
    <property type="type" value="gene"/>
</dbReference>
<dbReference type="neXtProt" id="NX_Q9NPD3"/>
<dbReference type="OpenTargets" id="ENSG00000178896"/>
<dbReference type="PharmGKB" id="PA134867931"/>
<dbReference type="VEuPathDB" id="HostDB:ENSG00000178896"/>
<dbReference type="eggNOG" id="KOG1068">
    <property type="taxonomic scope" value="Eukaryota"/>
</dbReference>
<dbReference type="GeneTree" id="ENSGT00940000153348"/>
<dbReference type="HOGENOM" id="CLU_063514_0_0_1"/>
<dbReference type="InParanoid" id="Q9NPD3"/>
<dbReference type="OMA" id="RYNMAPF"/>
<dbReference type="OrthoDB" id="27298at2759"/>
<dbReference type="PAN-GO" id="Q9NPD3">
    <property type="GO annotations" value="8 GO annotations based on evolutionary models"/>
</dbReference>
<dbReference type="PhylomeDB" id="Q9NPD3"/>
<dbReference type="TreeFam" id="TF313915"/>
<dbReference type="PathwayCommons" id="Q9NPD3"/>
<dbReference type="Reactome" id="R-HSA-380994">
    <property type="pathway name" value="ATF4 activates genes in response to endoplasmic reticulum stress"/>
</dbReference>
<dbReference type="Reactome" id="R-HSA-429958">
    <property type="pathway name" value="mRNA decay by 3' to 5' exoribonuclease"/>
</dbReference>
<dbReference type="Reactome" id="R-HSA-450385">
    <property type="pathway name" value="Butyrate Response Factor 1 (BRF1) binds and destabilizes mRNA"/>
</dbReference>
<dbReference type="Reactome" id="R-HSA-450513">
    <property type="pathway name" value="Tristetraprolin (TTP, ZFP36) binds and destabilizes mRNA"/>
</dbReference>
<dbReference type="Reactome" id="R-HSA-450604">
    <property type="pathway name" value="KSRP (KHSRP) binds and destabilizes mRNA"/>
</dbReference>
<dbReference type="Reactome" id="R-HSA-6791226">
    <property type="pathway name" value="Major pathway of rRNA processing in the nucleolus and cytosol"/>
</dbReference>
<dbReference type="SignaLink" id="Q9NPD3"/>
<dbReference type="SIGNOR" id="Q9NPD3"/>
<dbReference type="BioGRID-ORCS" id="54512">
    <property type="hits" value="802 hits in 1142 CRISPR screens"/>
</dbReference>
<dbReference type="CD-CODE" id="91857CE7">
    <property type="entry name" value="Nucleolus"/>
</dbReference>
<dbReference type="ChiTaRS" id="EXOSC4">
    <property type="organism name" value="human"/>
</dbReference>
<dbReference type="EvolutionaryTrace" id="Q9NPD3"/>
<dbReference type="GeneWiki" id="Exosome_component_4"/>
<dbReference type="GenomeRNAi" id="54512"/>
<dbReference type="Pharos" id="Q9NPD3">
    <property type="development level" value="Tbio"/>
</dbReference>
<dbReference type="PRO" id="PR:Q9NPD3"/>
<dbReference type="Proteomes" id="UP000005640">
    <property type="component" value="Chromosome 8"/>
</dbReference>
<dbReference type="RNAct" id="Q9NPD3">
    <property type="molecule type" value="protein"/>
</dbReference>
<dbReference type="Bgee" id="ENSG00000178896">
    <property type="expression patterns" value="Expressed in left testis and 132 other cell types or tissues"/>
</dbReference>
<dbReference type="ExpressionAtlas" id="Q9NPD3">
    <property type="expression patterns" value="baseline and differential"/>
</dbReference>
<dbReference type="GO" id="GO:0005737">
    <property type="term" value="C:cytoplasm"/>
    <property type="evidence" value="ECO:0000314"/>
    <property type="project" value="UniProtKB"/>
</dbReference>
<dbReference type="GO" id="GO:0000177">
    <property type="term" value="C:cytoplasmic exosome (RNase complex)"/>
    <property type="evidence" value="ECO:0000318"/>
    <property type="project" value="GO_Central"/>
</dbReference>
<dbReference type="GO" id="GO:0005829">
    <property type="term" value="C:cytosol"/>
    <property type="evidence" value="ECO:0000314"/>
    <property type="project" value="HPA"/>
</dbReference>
<dbReference type="GO" id="GO:0000791">
    <property type="term" value="C:euchromatin"/>
    <property type="evidence" value="ECO:0000315"/>
    <property type="project" value="UniProtKB"/>
</dbReference>
<dbReference type="GO" id="GO:0000178">
    <property type="term" value="C:exosome (RNase complex)"/>
    <property type="evidence" value="ECO:0000314"/>
    <property type="project" value="UniProtKB"/>
</dbReference>
<dbReference type="GO" id="GO:0043231">
    <property type="term" value="C:intracellular membrane-bounded organelle"/>
    <property type="evidence" value="ECO:0000314"/>
    <property type="project" value="HPA"/>
</dbReference>
<dbReference type="GO" id="GO:0000176">
    <property type="term" value="C:nuclear exosome (RNase complex)"/>
    <property type="evidence" value="ECO:0000318"/>
    <property type="project" value="GO_Central"/>
</dbReference>
<dbReference type="GO" id="GO:0101019">
    <property type="term" value="C:nucleolar exosome (RNase complex)"/>
    <property type="evidence" value="ECO:0000303"/>
    <property type="project" value="ComplexPortal"/>
</dbReference>
<dbReference type="GO" id="GO:0005730">
    <property type="term" value="C:nucleolus"/>
    <property type="evidence" value="ECO:0000314"/>
    <property type="project" value="ComplexPortal"/>
</dbReference>
<dbReference type="GO" id="GO:0005654">
    <property type="term" value="C:nucleoplasm"/>
    <property type="evidence" value="ECO:0000314"/>
    <property type="project" value="HPA"/>
</dbReference>
<dbReference type="GO" id="GO:0005634">
    <property type="term" value="C:nucleus"/>
    <property type="evidence" value="ECO:0000314"/>
    <property type="project" value="UniProtKB"/>
</dbReference>
<dbReference type="GO" id="GO:0000175">
    <property type="term" value="F:3'-5'-RNA exonuclease activity"/>
    <property type="evidence" value="ECO:0000303"/>
    <property type="project" value="UniProtKB"/>
</dbReference>
<dbReference type="GO" id="GO:0035925">
    <property type="term" value="F:mRNA 3'-UTR AU-rich region binding"/>
    <property type="evidence" value="ECO:0000314"/>
    <property type="project" value="GO_Central"/>
</dbReference>
<dbReference type="GO" id="GO:0003723">
    <property type="term" value="F:RNA binding"/>
    <property type="evidence" value="ECO:0000318"/>
    <property type="project" value="GO_Central"/>
</dbReference>
<dbReference type="GO" id="GO:0051607">
    <property type="term" value="P:defense response to virus"/>
    <property type="evidence" value="ECO:0000315"/>
    <property type="project" value="MGI"/>
</dbReference>
<dbReference type="GO" id="GO:0045006">
    <property type="term" value="P:DNA deamination"/>
    <property type="evidence" value="ECO:0000314"/>
    <property type="project" value="UniProtKB"/>
</dbReference>
<dbReference type="GO" id="GO:0071044">
    <property type="term" value="P:histone mRNA catabolic process"/>
    <property type="evidence" value="ECO:0000315"/>
    <property type="project" value="UniProtKB"/>
</dbReference>
<dbReference type="GO" id="GO:0000460">
    <property type="term" value="P:maturation of 5.8S rRNA"/>
    <property type="evidence" value="ECO:0000315"/>
    <property type="project" value="UniProtKB"/>
</dbReference>
<dbReference type="GO" id="GO:0071028">
    <property type="term" value="P:nuclear mRNA surveillance"/>
    <property type="evidence" value="ECO:0000315"/>
    <property type="project" value="UniProtKB"/>
</dbReference>
<dbReference type="GO" id="GO:0000956">
    <property type="term" value="P:nuclear-transcribed mRNA catabolic process"/>
    <property type="evidence" value="ECO:0000315"/>
    <property type="project" value="UniProtKB"/>
</dbReference>
<dbReference type="GO" id="GO:0071051">
    <property type="term" value="P:poly(A)-dependent snoRNA 3'-end processing"/>
    <property type="evidence" value="ECO:0000318"/>
    <property type="project" value="GO_Central"/>
</dbReference>
<dbReference type="GO" id="GO:0030307">
    <property type="term" value="P:positive regulation of cell growth"/>
    <property type="evidence" value="ECO:0000315"/>
    <property type="project" value="UniProtKB"/>
</dbReference>
<dbReference type="GO" id="GO:0006401">
    <property type="term" value="P:RNA catabolic process"/>
    <property type="evidence" value="ECO:0000314"/>
    <property type="project" value="ComplexPortal"/>
</dbReference>
<dbReference type="GO" id="GO:0006396">
    <property type="term" value="P:RNA processing"/>
    <property type="evidence" value="ECO:0000314"/>
    <property type="project" value="ComplexPortal"/>
</dbReference>
<dbReference type="GO" id="GO:0016075">
    <property type="term" value="P:rRNA catabolic process"/>
    <property type="evidence" value="ECO:0000318"/>
    <property type="project" value="GO_Central"/>
</dbReference>
<dbReference type="GO" id="GO:0006364">
    <property type="term" value="P:rRNA processing"/>
    <property type="evidence" value="ECO:0000303"/>
    <property type="project" value="UniProtKB"/>
</dbReference>
<dbReference type="GO" id="GO:0034475">
    <property type="term" value="P:U4 snRNA 3'-end processing"/>
    <property type="evidence" value="ECO:0000318"/>
    <property type="project" value="GO_Central"/>
</dbReference>
<dbReference type="CDD" id="cd11370">
    <property type="entry name" value="RNase_PH_RRP41"/>
    <property type="match status" value="1"/>
</dbReference>
<dbReference type="FunFam" id="3.30.230.70:FF:000010">
    <property type="entry name" value="Exosome complex component RRP41"/>
    <property type="match status" value="1"/>
</dbReference>
<dbReference type="Gene3D" id="3.30.230.70">
    <property type="entry name" value="GHMP Kinase, N-terminal domain"/>
    <property type="match status" value="1"/>
</dbReference>
<dbReference type="InterPro" id="IPR001247">
    <property type="entry name" value="ExoRNase_PH_dom1"/>
</dbReference>
<dbReference type="InterPro" id="IPR015847">
    <property type="entry name" value="ExoRNase_PH_dom2"/>
</dbReference>
<dbReference type="InterPro" id="IPR036345">
    <property type="entry name" value="ExoRNase_PH_dom2_sf"/>
</dbReference>
<dbReference type="InterPro" id="IPR027408">
    <property type="entry name" value="PNPase/RNase_PH_dom_sf"/>
</dbReference>
<dbReference type="InterPro" id="IPR020568">
    <property type="entry name" value="Ribosomal_Su5_D2-typ_SF"/>
</dbReference>
<dbReference type="InterPro" id="IPR050080">
    <property type="entry name" value="RNase_PH"/>
</dbReference>
<dbReference type="PANTHER" id="PTHR11953">
    <property type="entry name" value="EXOSOME COMPLEX COMPONENT"/>
    <property type="match status" value="1"/>
</dbReference>
<dbReference type="PANTHER" id="PTHR11953:SF0">
    <property type="entry name" value="EXOSOME COMPLEX COMPONENT RRP41"/>
    <property type="match status" value="1"/>
</dbReference>
<dbReference type="Pfam" id="PF01138">
    <property type="entry name" value="RNase_PH"/>
    <property type="match status" value="1"/>
</dbReference>
<dbReference type="Pfam" id="PF03725">
    <property type="entry name" value="RNase_PH_C"/>
    <property type="match status" value="1"/>
</dbReference>
<dbReference type="SUPFAM" id="SSF55666">
    <property type="entry name" value="Ribonuclease PH domain 2-like"/>
    <property type="match status" value="1"/>
</dbReference>
<dbReference type="SUPFAM" id="SSF54211">
    <property type="entry name" value="Ribosomal protein S5 domain 2-like"/>
    <property type="match status" value="1"/>
</dbReference>
<comment type="function">
    <text evidence="2 3 4 5 7">Non-catalytic component of the RNA exosome complex which has 3'-&gt;5' exoribonuclease activity and participates in a multitude of cellular RNA processing and degradation events. In the nucleus, the RNA exosome complex is involved in proper maturation of stable RNA species such as rRNA, snRNA and snoRNA, in the elimination of RNA processing by-products and non-coding 'pervasive' transcripts, such as antisense RNA species and promoter-upstream transcripts (PROMPTs), and of mRNAs with processing defects, thereby limiting or excluding their export to the cytoplasm. The RNA exosome may be involved in Ig class switch recombination (CSR) and/or Ig variable region somatic hypermutation (SHM) by targeting AICDA deamination activity to transcribed dsDNA substrates. In the cytoplasm, the RNA exosome complex is involved in general mRNA turnover and specifically degrades inherently unstable mRNAs containing AU-rich elements (AREs) within their 3' untranslated regions, and in RNA surveillance pathways, preventing translation of aberrant mRNAs. It seems to be involved in degradation of histone mRNA. The catalytic inactive RNA exosome core complex of 9 subunits (Exo-9) is proposed to play a pivotal role in the binding and presentation of RNA for ribonucleolysis, and to serve as a scaffold for the association with catalytic subunits and accessory proteins or complexes. EXOSC4 binds to ARE-containing RNAs.</text>
</comment>
<comment type="subunit">
    <text evidence="1 6 8 9 10">Component of the RNA exosome core complex (Exo-9), composed of EXOSC1, EXOSC2, EXOSC3, EXOSC4, EXOSC5, EXOSC6, EXOSC7, EXOSC8 and EXOSC9; within the complex interacts with EXOSC2, EXOSC7 and EXOSC9 (PubMed:29906447, PubMed:30047866). The catalytically inactive RNA exosome core complex (Exo-9) associates with the catalytic subunit EXOSC10/RRP6 (PubMed:11719186, PubMed:20531389, PubMed:29906447). Exo-9 may associate with DIS3 to form the nucleolar exosome complex, or DIS3L to form the cytoplasmic exosome complex (PubMed:11719186, PubMed:20531389, PubMed:29906447). Exo-9 is formed by a hexameric base ring consisting of the heterodimers EXOSC4-EXOSC9, EXOSC5-EXOSC8 and EXOSC6-EXOSC7, and a cap ring consisting of EXOSC1, EXOSC2 and EXOSC3 (PubMed:11719186, PubMed:20531389, PubMed:30047866). The RNA exosome complex associates with cofactors C1D/RRP47, MPHOSPH6/MPP6 and MTREX/MTR4 (PubMed:30047866). Interacts with DDX60 (PubMed:21791617). Interacts with DIS3; the interaction is direct (PubMed:30047866).</text>
</comment>
<comment type="interaction">
    <interactant intactId="EBI-371823">
        <id>Q9NPD3</id>
    </interactant>
    <interactant intactId="EBI-371892">
        <id>Q9Y3B2</id>
        <label>EXOSC1</label>
    </interactant>
    <organismsDiffer>false</organismsDiffer>
    <experiments>12</experiments>
</comment>
<comment type="interaction">
    <interactant intactId="EBI-371823">
        <id>Q9NPD3</id>
    </interactant>
    <interactant intactId="EBI-358236">
        <id>Q01780</id>
        <label>EXOSC10</label>
    </interactant>
    <organismsDiffer>false</organismsDiffer>
    <experiments>7</experiments>
</comment>
<comment type="interaction">
    <interactant intactId="EBI-371823">
        <id>Q9NPD3</id>
    </interactant>
    <interactant intactId="EBI-301735">
        <id>Q13868</id>
        <label>EXOSC2</label>
    </interactant>
    <organismsDiffer>false</organismsDiffer>
    <experiments>10</experiments>
</comment>
<comment type="interaction">
    <interactant intactId="EBI-371823">
        <id>Q9NPD3</id>
    </interactant>
    <interactant intactId="EBI-371866">
        <id>Q9NQT5</id>
        <label>EXOSC3</label>
    </interactant>
    <organismsDiffer>false</organismsDiffer>
    <experiments>9</experiments>
</comment>
<comment type="interaction">
    <interactant intactId="EBI-371823">
        <id>Q9NPD3</id>
    </interactant>
    <interactant intactId="EBI-371841">
        <id>Q15024</id>
        <label>EXOSC7</label>
    </interactant>
    <organismsDiffer>false</organismsDiffer>
    <experiments>8</experiments>
</comment>
<comment type="interaction">
    <interactant intactId="EBI-371823">
        <id>Q9NPD3</id>
    </interactant>
    <interactant intactId="EBI-347966">
        <id>Q06265</id>
        <label>EXOSC9</label>
    </interactant>
    <organismsDiffer>false</organismsDiffer>
    <experiments>9</experiments>
</comment>
<comment type="interaction">
    <interactant intactId="EBI-371823">
        <id>Q9NPD3</id>
    </interactant>
    <interactant intactId="EBI-739832">
        <id>Q8TBB1</id>
        <label>LNX1</label>
    </interactant>
    <organismsDiffer>false</organismsDiffer>
    <experiments>3</experiments>
</comment>
<comment type="interaction">
    <interactant intactId="EBI-371823">
        <id>Q9NPD3</id>
    </interactant>
    <interactant intactId="EBI-713847">
        <id>P56282</id>
        <label>POLE2</label>
    </interactant>
    <organismsDiffer>false</organismsDiffer>
    <experiments>5</experiments>
</comment>
<comment type="interaction">
    <interactant intactId="EBI-371823">
        <id>Q9NPD3</id>
    </interactant>
    <interactant intactId="EBI-727004">
        <id>O00560</id>
        <label>SDCBP</label>
    </interactant>
    <organismsDiffer>false</organismsDiffer>
    <experiments>3</experiments>
</comment>
<comment type="subcellular location">
    <subcellularLocation>
        <location evidence="3 11">Cytoplasm</location>
    </subcellularLocation>
    <subcellularLocation>
        <location evidence="3 11">Nucleus</location>
        <location evidence="3 11">Nucleolus</location>
    </subcellularLocation>
    <subcellularLocation>
        <location evidence="3 11">Nucleus</location>
    </subcellularLocation>
    <subcellularLocation>
        <location evidence="11">Nucleus</location>
        <location evidence="11">Nucleoplasm</location>
    </subcellularLocation>
</comment>
<comment type="similarity">
    <text evidence="13">Belongs to the RNase PH family.</text>
</comment>
<comment type="caution">
    <text evidence="13">The six exosome core subunits containing a RNase PH-domain are not phosphorolytically active.</text>
</comment>
<proteinExistence type="evidence at protein level"/>
<name>EXOS4_HUMAN</name>
<reference key="1">
    <citation type="journal article" date="2001" name="J. Biol. Chem.">
        <title>Three novel components of the human exosome.</title>
        <authorList>
            <person name="Brouwer R."/>
            <person name="Allmang C."/>
            <person name="Raijmakers R."/>
            <person name="van Aarssen Y."/>
            <person name="Egberts W.V."/>
            <person name="Petfalski E."/>
            <person name="van Venrooij W.J."/>
            <person name="Tollervey D."/>
            <person name="Pruijn G.J.M."/>
        </authorList>
    </citation>
    <scope>NUCLEOTIDE SEQUENCE [MRNA]</scope>
    <scope>CHARACTERIZATION</scope>
</reference>
<reference key="2">
    <citation type="journal article" date="2004" name="Nat. Genet.">
        <title>Complete sequencing and characterization of 21,243 full-length human cDNAs.</title>
        <authorList>
            <person name="Ota T."/>
            <person name="Suzuki Y."/>
            <person name="Nishikawa T."/>
            <person name="Otsuki T."/>
            <person name="Sugiyama T."/>
            <person name="Irie R."/>
            <person name="Wakamatsu A."/>
            <person name="Hayashi K."/>
            <person name="Sato H."/>
            <person name="Nagai K."/>
            <person name="Kimura K."/>
            <person name="Makita H."/>
            <person name="Sekine M."/>
            <person name="Obayashi M."/>
            <person name="Nishi T."/>
            <person name="Shibahara T."/>
            <person name="Tanaka T."/>
            <person name="Ishii S."/>
            <person name="Yamamoto J."/>
            <person name="Saito K."/>
            <person name="Kawai Y."/>
            <person name="Isono Y."/>
            <person name="Nakamura Y."/>
            <person name="Nagahari K."/>
            <person name="Murakami K."/>
            <person name="Yasuda T."/>
            <person name="Iwayanagi T."/>
            <person name="Wagatsuma M."/>
            <person name="Shiratori A."/>
            <person name="Sudo H."/>
            <person name="Hosoiri T."/>
            <person name="Kaku Y."/>
            <person name="Kodaira H."/>
            <person name="Kondo H."/>
            <person name="Sugawara M."/>
            <person name="Takahashi M."/>
            <person name="Kanda K."/>
            <person name="Yokoi T."/>
            <person name="Furuya T."/>
            <person name="Kikkawa E."/>
            <person name="Omura Y."/>
            <person name="Abe K."/>
            <person name="Kamihara K."/>
            <person name="Katsuta N."/>
            <person name="Sato K."/>
            <person name="Tanikawa M."/>
            <person name="Yamazaki M."/>
            <person name="Ninomiya K."/>
            <person name="Ishibashi T."/>
            <person name="Yamashita H."/>
            <person name="Murakawa K."/>
            <person name="Fujimori K."/>
            <person name="Tanai H."/>
            <person name="Kimata M."/>
            <person name="Watanabe M."/>
            <person name="Hiraoka S."/>
            <person name="Chiba Y."/>
            <person name="Ishida S."/>
            <person name="Ono Y."/>
            <person name="Takiguchi S."/>
            <person name="Watanabe S."/>
            <person name="Yosida M."/>
            <person name="Hotuta T."/>
            <person name="Kusano J."/>
            <person name="Kanehori K."/>
            <person name="Takahashi-Fujii A."/>
            <person name="Hara H."/>
            <person name="Tanase T.-O."/>
            <person name="Nomura Y."/>
            <person name="Togiya S."/>
            <person name="Komai F."/>
            <person name="Hara R."/>
            <person name="Takeuchi K."/>
            <person name="Arita M."/>
            <person name="Imose N."/>
            <person name="Musashino K."/>
            <person name="Yuuki H."/>
            <person name="Oshima A."/>
            <person name="Sasaki N."/>
            <person name="Aotsuka S."/>
            <person name="Yoshikawa Y."/>
            <person name="Matsunawa H."/>
            <person name="Ichihara T."/>
            <person name="Shiohata N."/>
            <person name="Sano S."/>
            <person name="Moriya S."/>
            <person name="Momiyama H."/>
            <person name="Satoh N."/>
            <person name="Takami S."/>
            <person name="Terashima Y."/>
            <person name="Suzuki O."/>
            <person name="Nakagawa S."/>
            <person name="Senoh A."/>
            <person name="Mizoguchi H."/>
            <person name="Goto Y."/>
            <person name="Shimizu F."/>
            <person name="Wakebe H."/>
            <person name="Hishigaki H."/>
            <person name="Watanabe T."/>
            <person name="Sugiyama A."/>
            <person name="Takemoto M."/>
            <person name="Kawakami B."/>
            <person name="Yamazaki M."/>
            <person name="Watanabe K."/>
            <person name="Kumagai A."/>
            <person name="Itakura S."/>
            <person name="Fukuzumi Y."/>
            <person name="Fujimori Y."/>
            <person name="Komiyama M."/>
            <person name="Tashiro H."/>
            <person name="Tanigami A."/>
            <person name="Fujiwara T."/>
            <person name="Ono T."/>
            <person name="Yamada K."/>
            <person name="Fujii Y."/>
            <person name="Ozaki K."/>
            <person name="Hirao M."/>
            <person name="Ohmori Y."/>
            <person name="Kawabata A."/>
            <person name="Hikiji T."/>
            <person name="Kobatake N."/>
            <person name="Inagaki H."/>
            <person name="Ikema Y."/>
            <person name="Okamoto S."/>
            <person name="Okitani R."/>
            <person name="Kawakami T."/>
            <person name="Noguchi S."/>
            <person name="Itoh T."/>
            <person name="Shigeta K."/>
            <person name="Senba T."/>
            <person name="Matsumura K."/>
            <person name="Nakajima Y."/>
            <person name="Mizuno T."/>
            <person name="Morinaga M."/>
            <person name="Sasaki M."/>
            <person name="Togashi T."/>
            <person name="Oyama M."/>
            <person name="Hata H."/>
            <person name="Watanabe M."/>
            <person name="Komatsu T."/>
            <person name="Mizushima-Sugano J."/>
            <person name="Satoh T."/>
            <person name="Shirai Y."/>
            <person name="Takahashi Y."/>
            <person name="Nakagawa K."/>
            <person name="Okumura K."/>
            <person name="Nagase T."/>
            <person name="Nomura N."/>
            <person name="Kikuchi H."/>
            <person name="Masuho Y."/>
            <person name="Yamashita R."/>
            <person name="Nakai K."/>
            <person name="Yada T."/>
            <person name="Nakamura Y."/>
            <person name="Ohara O."/>
            <person name="Isogai T."/>
            <person name="Sugano S."/>
        </authorList>
    </citation>
    <scope>NUCLEOTIDE SEQUENCE [LARGE SCALE MRNA]</scope>
</reference>
<reference key="3">
    <citation type="journal article" date="2006" name="Nature">
        <title>DNA sequence and analysis of human chromosome 8.</title>
        <authorList>
            <person name="Nusbaum C."/>
            <person name="Mikkelsen T.S."/>
            <person name="Zody M.C."/>
            <person name="Asakawa S."/>
            <person name="Taudien S."/>
            <person name="Garber M."/>
            <person name="Kodira C.D."/>
            <person name="Schueler M.G."/>
            <person name="Shimizu A."/>
            <person name="Whittaker C.A."/>
            <person name="Chang J.L."/>
            <person name="Cuomo C.A."/>
            <person name="Dewar K."/>
            <person name="FitzGerald M.G."/>
            <person name="Yang X."/>
            <person name="Allen N.R."/>
            <person name="Anderson S."/>
            <person name="Asakawa T."/>
            <person name="Blechschmidt K."/>
            <person name="Bloom T."/>
            <person name="Borowsky M.L."/>
            <person name="Butler J."/>
            <person name="Cook A."/>
            <person name="Corum B."/>
            <person name="DeArellano K."/>
            <person name="DeCaprio D."/>
            <person name="Dooley K.T."/>
            <person name="Dorris L. III"/>
            <person name="Engels R."/>
            <person name="Gloeckner G."/>
            <person name="Hafez N."/>
            <person name="Hagopian D.S."/>
            <person name="Hall J.L."/>
            <person name="Ishikawa S.K."/>
            <person name="Jaffe D.B."/>
            <person name="Kamat A."/>
            <person name="Kudoh J."/>
            <person name="Lehmann R."/>
            <person name="Lokitsang T."/>
            <person name="Macdonald P."/>
            <person name="Major J.E."/>
            <person name="Matthews C.D."/>
            <person name="Mauceli E."/>
            <person name="Menzel U."/>
            <person name="Mihalev A.H."/>
            <person name="Minoshima S."/>
            <person name="Murayama Y."/>
            <person name="Naylor J.W."/>
            <person name="Nicol R."/>
            <person name="Nguyen C."/>
            <person name="O'Leary S.B."/>
            <person name="O'Neill K."/>
            <person name="Parker S.C.J."/>
            <person name="Polley A."/>
            <person name="Raymond C.K."/>
            <person name="Reichwald K."/>
            <person name="Rodriguez J."/>
            <person name="Sasaki T."/>
            <person name="Schilhabel M."/>
            <person name="Siddiqui R."/>
            <person name="Smith C.L."/>
            <person name="Sneddon T.P."/>
            <person name="Talamas J.A."/>
            <person name="Tenzin P."/>
            <person name="Topham K."/>
            <person name="Venkataraman V."/>
            <person name="Wen G."/>
            <person name="Yamazaki S."/>
            <person name="Young S.K."/>
            <person name="Zeng Q."/>
            <person name="Zimmer A.R."/>
            <person name="Rosenthal A."/>
            <person name="Birren B.W."/>
            <person name="Platzer M."/>
            <person name="Shimizu N."/>
            <person name="Lander E.S."/>
        </authorList>
    </citation>
    <scope>NUCLEOTIDE SEQUENCE [LARGE SCALE GENOMIC DNA]</scope>
</reference>
<reference key="4">
    <citation type="journal article" date="2004" name="Genome Res.">
        <title>The status, quality, and expansion of the NIH full-length cDNA project: the Mammalian Gene Collection (MGC).</title>
        <authorList>
            <consortium name="The MGC Project Team"/>
        </authorList>
    </citation>
    <scope>NUCLEOTIDE SEQUENCE [LARGE SCALE MRNA]</scope>
    <source>
        <tissue>Skin</tissue>
    </source>
</reference>
<reference key="5">
    <citation type="submission" date="2004-10" db="UniProtKB">
        <authorList>
            <person name="Bienvenut W.V."/>
        </authorList>
    </citation>
    <scope>PROTEIN SEQUENCE OF 2-13</scope>
    <scope>CLEAVAGE OF INITIATOR METHIONINE</scope>
    <scope>ACETYLATION AT ALA-2</scope>
    <scope>IDENTIFICATION BY MASS SPECTROMETRY</scope>
    <source>
        <tissue>Cervix carcinoma</tissue>
    </source>
</reference>
<reference key="6">
    <citation type="journal article" date="1999" name="Genes Dev.">
        <title>The yeast exosome and human PM-Scl are related complexes of 3'--&gt;5' exonucleases.</title>
        <authorList>
            <person name="Allmang C."/>
            <person name="Petfalski E."/>
            <person name="Podtelejnikov A."/>
            <person name="Mann M."/>
            <person name="Tollervey D."/>
            <person name="Mitchell P."/>
        </authorList>
    </citation>
    <scope>CHARACTERIZATION</scope>
</reference>
<reference key="7">
    <citation type="journal article" date="2001" name="Cell">
        <title>AU binding proteins recruit the exosome to degrade ARE-containing mRNAs.</title>
        <authorList>
            <person name="Chen C.-Y."/>
            <person name="Gherzi R."/>
            <person name="Ong S.-E."/>
            <person name="Chan E.L."/>
            <person name="Raijmakers R."/>
            <person name="Pruijn G.J.M."/>
            <person name="Stoecklin G."/>
            <person name="Moroni C."/>
            <person name="Mann M."/>
            <person name="Karin M."/>
        </authorList>
    </citation>
    <scope>IDENTIFICATION BY MASS SPECTROMETRY</scope>
    <scope>IDENTIFICATION IN THE RNA EXOSOME CORE COMPLEX</scope>
</reference>
<reference key="8">
    <citation type="journal article" date="2006" name="RNA">
        <title>Sequence-specific RNA binding mediated by the RNase PH domain of components of the exosome.</title>
        <authorList>
            <person name="Anderson J.R."/>
            <person name="Mukherjee D."/>
            <person name="Muthukumaraswamy K."/>
            <person name="Moraes K.C."/>
            <person name="Wilusz C.J."/>
            <person name="Wilusz J."/>
        </authorList>
    </citation>
    <scope>FUNCTION IN ARE-CONTAINING MRNA-BINDING</scope>
</reference>
<reference key="9">
    <citation type="journal article" date="2007" name="RNA">
        <title>Human cell growth requires a functional cytoplasmic exosome, which is involved in various mRNA decay pathways.</title>
        <authorList>
            <person name="van Dijk E.L."/>
            <person name="Schilders G."/>
            <person name="Pruijn G.J."/>
        </authorList>
    </citation>
    <scope>FUNCTION IN MRNA DEGRADATION</scope>
    <scope>SUBCELLULAR LOCATION</scope>
</reference>
<reference key="10">
    <citation type="journal article" date="2008" name="Genes Dev.">
        <title>Degradation of histone mRNA requires oligouridylation followed by decapping and simultaneous degradation of the mRNA both 5' to 3' and 3' to 5'.</title>
        <authorList>
            <person name="Mullen T.E."/>
            <person name="Marzluff W.F."/>
        </authorList>
    </citation>
    <scope>FUNCTION IN HISTONE MRNA DEGRADATION ACTIVITY</scope>
</reference>
<reference key="11">
    <citation type="journal article" date="2009" name="Anal. Chem.">
        <title>Lys-N and trypsin cover complementary parts of the phosphoproteome in a refined SCX-based approach.</title>
        <authorList>
            <person name="Gauci S."/>
            <person name="Helbig A.O."/>
            <person name="Slijper M."/>
            <person name="Krijgsveld J."/>
            <person name="Heck A.J."/>
            <person name="Mohammed S."/>
        </authorList>
    </citation>
    <scope>ACETYLATION [LARGE SCALE ANALYSIS] AT ALA-2</scope>
    <scope>CLEAVAGE OF INITIATOR METHIONINE [LARGE SCALE ANALYSIS]</scope>
    <scope>IDENTIFICATION BY MASS SPECTROMETRY [LARGE SCALE ANALYSIS]</scope>
</reference>
<reference key="12">
    <citation type="journal article" date="2010" name="EMBO J.">
        <title>Dis3-like 1: a novel exoribonuclease associated with the human exosome.</title>
        <authorList>
            <person name="Staals R.H."/>
            <person name="Bronkhorst A.W."/>
            <person name="Schilders G."/>
            <person name="Slomovic S."/>
            <person name="Schuster G."/>
            <person name="Heck A.J."/>
            <person name="Raijmakers R."/>
            <person name="Pruijn G.J."/>
        </authorList>
    </citation>
    <scope>IDENTIFICATION IN THE RNA EXOSOME COMPLEX</scope>
    <scope>IDENTIFICATION BY MASS SPECTROMETRY</scope>
</reference>
<reference key="13">
    <citation type="journal article" date="2010" name="Proc. Natl. Acad. Sci. U.S.A.">
        <title>Addition of poly(A) and poly(A)-rich tails during RNA degradation in the cytoplasm of human cells.</title>
        <authorList>
            <person name="Slomovic S."/>
            <person name="Fremder E."/>
            <person name="Staals R.H."/>
            <person name="Pruijn G.J."/>
            <person name="Schuster G."/>
        </authorList>
    </citation>
    <scope>FUNCTION IN RRNA MATURATION</scope>
</reference>
<reference key="14">
    <citation type="journal article" date="2011" name="BMC Syst. Biol.">
        <title>Initial characterization of the human central proteome.</title>
        <authorList>
            <person name="Burkard T.R."/>
            <person name="Planyavsky M."/>
            <person name="Kaupe I."/>
            <person name="Breitwieser F.P."/>
            <person name="Buerckstuemmer T."/>
            <person name="Bennett K.L."/>
            <person name="Superti-Furga G."/>
            <person name="Colinge J."/>
        </authorList>
    </citation>
    <scope>IDENTIFICATION BY MASS SPECTROMETRY [LARGE SCALE ANALYSIS]</scope>
</reference>
<reference key="15">
    <citation type="journal article" date="2011" name="Cell">
        <title>The RNA exosome targets the AID cytidine deaminase to both strands of transcribed duplex DNA substrates.</title>
        <authorList>
            <person name="Basu U."/>
            <person name="Meng F.L."/>
            <person name="Keim C."/>
            <person name="Grinstein V."/>
            <person name="Pefanis E."/>
            <person name="Eccleston J."/>
            <person name="Zhang T."/>
            <person name="Myers D."/>
            <person name="Wasserman C.R."/>
            <person name="Wesemann D.R."/>
            <person name="Januszyk K."/>
            <person name="Gregory R.I."/>
            <person name="Deng H."/>
            <person name="Lima C.D."/>
            <person name="Alt F.W."/>
        </authorList>
    </citation>
    <scope>FUNCTION IN DEAMINATION OF TRANSCRIBED DNA SUBSTRATE</scope>
</reference>
<reference key="16">
    <citation type="journal article" date="2011" name="Mol. Cell. Biol.">
        <title>DDX60, a DEXD/H box helicase, is a novel antiviral factor promoting RIG-I-like receptor-mediated signaling.</title>
        <authorList>
            <person name="Miyashita M."/>
            <person name="Oshiumi H."/>
            <person name="Matsumoto M."/>
            <person name="Seya T."/>
        </authorList>
    </citation>
    <scope>INTERACTION WITH DDX60</scope>
</reference>
<reference key="17">
    <citation type="journal article" date="2012" name="Mol. Cell. Proteomics">
        <title>Comparative large-scale characterisation of plant vs. mammal proteins reveals similar and idiosyncratic N-alpha acetylation features.</title>
        <authorList>
            <person name="Bienvenut W.V."/>
            <person name="Sumpton D."/>
            <person name="Martinez A."/>
            <person name="Lilla S."/>
            <person name="Espagne C."/>
            <person name="Meinnel T."/>
            <person name="Giglione C."/>
        </authorList>
    </citation>
    <scope>ACETYLATION [LARGE SCALE ANALYSIS] AT ALA-2</scope>
    <scope>CLEAVAGE OF INITIATOR METHIONINE [LARGE SCALE ANALYSIS]</scope>
    <scope>IDENTIFICATION BY MASS SPECTROMETRY [LARGE SCALE ANALYSIS]</scope>
</reference>
<reference key="18">
    <citation type="journal article" date="2012" name="Proc. Natl. Acad. Sci. U.S.A.">
        <title>N-terminal acetylome analyses and functional insights of the N-terminal acetyltransferase NatB.</title>
        <authorList>
            <person name="Van Damme P."/>
            <person name="Lasa M."/>
            <person name="Polevoda B."/>
            <person name="Gazquez C."/>
            <person name="Elosegui-Artola A."/>
            <person name="Kim D.S."/>
            <person name="De Juan-Pardo E."/>
            <person name="Demeyer K."/>
            <person name="Hole K."/>
            <person name="Larrea E."/>
            <person name="Timmerman E."/>
            <person name="Prieto J."/>
            <person name="Arnesen T."/>
            <person name="Sherman F."/>
            <person name="Gevaert K."/>
            <person name="Aldabe R."/>
        </authorList>
    </citation>
    <scope>ACETYLATION [LARGE SCALE ANALYSIS] AT ALA-2</scope>
    <scope>CLEAVAGE OF INITIATOR METHIONINE [LARGE SCALE ANALYSIS]</scope>
    <scope>IDENTIFICATION BY MASS SPECTROMETRY [LARGE SCALE ANALYSIS]</scope>
</reference>
<reference evidence="14" key="19">
    <citation type="journal article" date="2006" name="Cell">
        <title>Reconstitution, activities, and structure of the eukaryotic RNA exosome.</title>
        <authorList>
            <person name="Liu Q."/>
            <person name="Greimann J.C."/>
            <person name="Lima C.D."/>
        </authorList>
    </citation>
    <scope>X-RAY CRYSTALLOGRAPHY (3.35 ANGSTROMS)</scope>
    <scope>LACK OF CATALYTIC ACTIVITY</scope>
    <scope>RECONSTITUTION OF THE RNA EXOSOME CORE COMPLEX</scope>
</reference>
<reference key="20">
    <citation type="journal article" date="2007" name="Cell">
        <authorList>
            <person name="Liu Q."/>
            <person name="Greimann J.C."/>
            <person name="Lima C.D."/>
        </authorList>
    </citation>
    <scope>ERRATUM OF PUBMED:17174896</scope>
</reference>
<reference evidence="13" key="21">
    <citation type="journal article" date="2023" name="Nucleic Acids Res.">
        <title>The ubiquitin-specific protease USP36 SUMOylates EXOSC10 and promotes the nucleolar RNA exosome function in rRNA processing.</title>
        <authorList>
            <person name="Chen Y."/>
            <person name="Li Y."/>
            <person name="Dai R.S."/>
            <person name="Savage J.C."/>
            <person name="Shinde U."/>
            <person name="Klimek J."/>
            <person name="David L.L."/>
            <person name="Young E.A."/>
            <person name="Hafner M."/>
            <person name="Sears R.C."/>
            <person name="Sun X.X."/>
            <person name="Dai M.S."/>
        </authorList>
    </citation>
    <scope>SUBCELLULAR LOCATION</scope>
</reference>
<reference evidence="15 16" key="22">
    <citation type="journal article" date="2018" name="Cell">
        <title>Helicase-Dependent RNA Decay Illuminated by a Cryo-EM Structure of a Human Nuclear RNA Exosome-MTR4 Complex.</title>
        <authorList>
            <person name="Weick E.M."/>
            <person name="Puno M.R."/>
            <person name="Januszyk K."/>
            <person name="Zinder J.C."/>
            <person name="DiMattia M.A."/>
            <person name="Lima C.D."/>
        </authorList>
    </citation>
    <scope>STRUCTURE BY ELECTRON MICROSCOPY (3.45 ANGSTROMS)</scope>
    <scope>SUBUNIT</scope>
</reference>
<reference evidence="17" key="23">
    <citation type="journal article" date="2018" name="Elife">
        <title>Distinct and evolutionary conserved structural features of the human nuclear exosome complex.</title>
        <authorList>
            <person name="Gerlach P."/>
            <person name="Schuller J.M."/>
            <person name="Bonneau F."/>
            <person name="Basquin J."/>
            <person name="Reichelt P."/>
            <person name="Falk S."/>
            <person name="Conti E."/>
        </authorList>
    </citation>
    <scope>STRUCTURE BY ELECTRON MICROSCOPY (3.80 ANGSTROMS) OF THE RNA EXOSOME COMPLEX IN COMPLEX WITH MPP6</scope>
    <scope>SUBUNIT</scope>
</reference>
<feature type="initiator methionine" description="Removed" evidence="12 18 19 20">
    <location>
        <position position="1"/>
    </location>
</feature>
<feature type="chain" id="PRO_0000139958" description="Exosome complex component RRP41">
    <location>
        <begin position="2"/>
        <end position="245"/>
    </location>
</feature>
<feature type="modified residue" description="N-acetylalanine" evidence="12 18 19 20">
    <location>
        <position position="2"/>
    </location>
</feature>
<feature type="strand" evidence="21">
    <location>
        <begin position="14"/>
        <end position="17"/>
    </location>
</feature>
<feature type="strand" evidence="21">
    <location>
        <begin position="25"/>
        <end position="30"/>
    </location>
</feature>
<feature type="strand" evidence="21">
    <location>
        <begin position="32"/>
        <end position="45"/>
    </location>
</feature>
<feature type="strand" evidence="21">
    <location>
        <begin position="47"/>
        <end position="57"/>
    </location>
</feature>
<feature type="strand" evidence="21">
    <location>
        <begin position="60"/>
        <end position="62"/>
    </location>
</feature>
<feature type="strand" evidence="22">
    <location>
        <begin position="67"/>
        <end position="69"/>
    </location>
</feature>
<feature type="strand" evidence="21">
    <location>
        <begin position="72"/>
        <end position="78"/>
    </location>
</feature>
<feature type="turn" evidence="21">
    <location>
        <begin position="80"/>
        <end position="82"/>
    </location>
</feature>
<feature type="strand" evidence="21">
    <location>
        <begin position="83"/>
        <end position="85"/>
    </location>
</feature>
<feature type="turn" evidence="21">
    <location>
        <begin position="89"/>
        <end position="91"/>
    </location>
</feature>
<feature type="helix" evidence="21">
    <location>
        <begin position="94"/>
        <end position="109"/>
    </location>
</feature>
<feature type="helix" evidence="21">
    <location>
        <begin position="113"/>
        <end position="115"/>
    </location>
</feature>
<feature type="strand" evidence="21">
    <location>
        <begin position="119"/>
        <end position="129"/>
    </location>
</feature>
<feature type="helix" evidence="21">
    <location>
        <begin position="134"/>
        <end position="148"/>
    </location>
</feature>
<feature type="strand" evidence="21">
    <location>
        <begin position="158"/>
        <end position="165"/>
    </location>
</feature>
<feature type="strand" evidence="21">
    <location>
        <begin position="168"/>
        <end position="172"/>
    </location>
</feature>
<feature type="helix" evidence="21">
    <location>
        <begin position="175"/>
        <end position="178"/>
    </location>
</feature>
<feature type="strand" evidence="21">
    <location>
        <begin position="185"/>
        <end position="189"/>
    </location>
</feature>
<feature type="turn" evidence="21">
    <location>
        <begin position="191"/>
        <end position="193"/>
    </location>
</feature>
<feature type="strand" evidence="21">
    <location>
        <begin position="198"/>
        <end position="201"/>
    </location>
</feature>
<feature type="helix" evidence="21">
    <location>
        <begin position="210"/>
        <end position="239"/>
    </location>
</feature>
<organism>
    <name type="scientific">Homo sapiens</name>
    <name type="common">Human</name>
    <dbReference type="NCBI Taxonomy" id="9606"/>
    <lineage>
        <taxon>Eukaryota</taxon>
        <taxon>Metazoa</taxon>
        <taxon>Chordata</taxon>
        <taxon>Craniata</taxon>
        <taxon>Vertebrata</taxon>
        <taxon>Euteleostomi</taxon>
        <taxon>Mammalia</taxon>
        <taxon>Eutheria</taxon>
        <taxon>Euarchontoglires</taxon>
        <taxon>Primates</taxon>
        <taxon>Haplorrhini</taxon>
        <taxon>Catarrhini</taxon>
        <taxon>Hominidae</taxon>
        <taxon>Homo</taxon>
    </lineage>
</organism>
<accession>Q9NPD3</accession>
<gene>
    <name type="primary">EXOSC4</name>
    <name type="synonym">RRP41</name>
    <name type="synonym">SKI6</name>
</gene>
<evidence type="ECO:0000269" key="1">
    <source>
    </source>
</evidence>
<evidence type="ECO:0000269" key="2">
    <source>
    </source>
</evidence>
<evidence type="ECO:0000269" key="3">
    <source>
    </source>
</evidence>
<evidence type="ECO:0000269" key="4">
    <source>
    </source>
</evidence>
<evidence type="ECO:0000269" key="5">
    <source>
    </source>
</evidence>
<evidence type="ECO:0000269" key="6">
    <source>
    </source>
</evidence>
<evidence type="ECO:0000269" key="7">
    <source>
    </source>
</evidence>
<evidence type="ECO:0000269" key="8">
    <source>
    </source>
</evidence>
<evidence type="ECO:0000269" key="9">
    <source>
    </source>
</evidence>
<evidence type="ECO:0000269" key="10">
    <source>
    </source>
</evidence>
<evidence type="ECO:0000269" key="11">
    <source>
    </source>
</evidence>
<evidence type="ECO:0000269" key="12">
    <source ref="5"/>
</evidence>
<evidence type="ECO:0000305" key="13"/>
<evidence type="ECO:0007744" key="14">
    <source>
        <dbReference type="PDB" id="2NN6"/>
    </source>
</evidence>
<evidence type="ECO:0007744" key="15">
    <source>
        <dbReference type="PDB" id="6D6Q"/>
    </source>
</evidence>
<evidence type="ECO:0007744" key="16">
    <source>
        <dbReference type="PDB" id="6D6R"/>
    </source>
</evidence>
<evidence type="ECO:0007744" key="17">
    <source>
        <dbReference type="PDB" id="6H25"/>
    </source>
</evidence>
<evidence type="ECO:0007744" key="18">
    <source>
    </source>
</evidence>
<evidence type="ECO:0007744" key="19">
    <source>
    </source>
</evidence>
<evidence type="ECO:0007744" key="20">
    <source>
    </source>
</evidence>
<evidence type="ECO:0007829" key="21">
    <source>
        <dbReference type="PDB" id="2NN6"/>
    </source>
</evidence>
<evidence type="ECO:0007829" key="22">
    <source>
        <dbReference type="PDB" id="6D6Q"/>
    </source>
</evidence>
<sequence length="245" mass="26383">MAGLELLSDQGYRVDGRRAGELRKIQARMGVFAQADGSAYIEQGNTKALAVVYGPHEIRGSRARALPDRALVNCQYSSATFSTGERKRRPHGDRKSCEMGLQLRQTFEAAILTQLHPRSQIDIYVQVLQADGGTYAACVNAATLAVLDAGIPMRDFVCACSAGFVDGTALADLSHVEEAAGGPQLALALLPASGQIALLEMDARLHEDHLERVLEAAAQAARDVHTLLDRVVRQHVREASILLGD</sequence>
<protein>
    <recommendedName>
        <fullName>Exosome complex component RRP41</fullName>
    </recommendedName>
    <alternativeName>
        <fullName>Exosome component 4</fullName>
    </alternativeName>
    <alternativeName>
        <fullName>Ribosomal RNA-processing protein 41</fullName>
    </alternativeName>
    <alternativeName>
        <fullName>p12A</fullName>
    </alternativeName>
</protein>
<keyword id="KW-0002">3D-structure</keyword>
<keyword id="KW-0007">Acetylation</keyword>
<keyword id="KW-0963">Cytoplasm</keyword>
<keyword id="KW-0903">Direct protein sequencing</keyword>
<keyword id="KW-0271">Exosome</keyword>
<keyword id="KW-0539">Nucleus</keyword>
<keyword id="KW-1267">Proteomics identification</keyword>
<keyword id="KW-1185">Reference proteome</keyword>
<keyword id="KW-0694">RNA-binding</keyword>
<keyword id="KW-0698">rRNA processing</keyword>